<accession>B8JBP4</accession>
<protein>
    <recommendedName>
        <fullName evidence="1">Large ribosomal subunit protein bL21</fullName>
    </recommendedName>
    <alternativeName>
        <fullName evidence="2">50S ribosomal protein L21</fullName>
    </alternativeName>
</protein>
<name>RL21_ANAD2</name>
<sequence>MYAVIRTGGKQYRVAQGDRVKIEKLAGDVGGKVNFDVLLVGGEGEAKVGTPTLAGVTVEGEIVAQDKHKKVIHFRKKKEGWTKKRGHRQPYTEVLITTVRA</sequence>
<keyword id="KW-0687">Ribonucleoprotein</keyword>
<keyword id="KW-0689">Ribosomal protein</keyword>
<keyword id="KW-0694">RNA-binding</keyword>
<keyword id="KW-0699">rRNA-binding</keyword>
<evidence type="ECO:0000255" key="1">
    <source>
        <dbReference type="HAMAP-Rule" id="MF_01363"/>
    </source>
</evidence>
<evidence type="ECO:0000305" key="2"/>
<proteinExistence type="inferred from homology"/>
<dbReference type="EMBL" id="CP001359">
    <property type="protein sequence ID" value="ACL67652.1"/>
    <property type="molecule type" value="Genomic_DNA"/>
</dbReference>
<dbReference type="RefSeq" id="WP_012528267.1">
    <property type="nucleotide sequence ID" value="NC_011891.1"/>
</dbReference>
<dbReference type="SMR" id="B8JBP4"/>
<dbReference type="KEGG" id="acp:A2cp1_4335"/>
<dbReference type="HOGENOM" id="CLU_061463_3_2_7"/>
<dbReference type="Proteomes" id="UP000007089">
    <property type="component" value="Chromosome"/>
</dbReference>
<dbReference type="GO" id="GO:0005737">
    <property type="term" value="C:cytoplasm"/>
    <property type="evidence" value="ECO:0007669"/>
    <property type="project" value="UniProtKB-ARBA"/>
</dbReference>
<dbReference type="GO" id="GO:1990904">
    <property type="term" value="C:ribonucleoprotein complex"/>
    <property type="evidence" value="ECO:0007669"/>
    <property type="project" value="UniProtKB-KW"/>
</dbReference>
<dbReference type="GO" id="GO:0005840">
    <property type="term" value="C:ribosome"/>
    <property type="evidence" value="ECO:0007669"/>
    <property type="project" value="UniProtKB-KW"/>
</dbReference>
<dbReference type="GO" id="GO:0019843">
    <property type="term" value="F:rRNA binding"/>
    <property type="evidence" value="ECO:0007669"/>
    <property type="project" value="UniProtKB-UniRule"/>
</dbReference>
<dbReference type="GO" id="GO:0003735">
    <property type="term" value="F:structural constituent of ribosome"/>
    <property type="evidence" value="ECO:0007669"/>
    <property type="project" value="InterPro"/>
</dbReference>
<dbReference type="GO" id="GO:0006412">
    <property type="term" value="P:translation"/>
    <property type="evidence" value="ECO:0007669"/>
    <property type="project" value="UniProtKB-UniRule"/>
</dbReference>
<dbReference type="HAMAP" id="MF_01363">
    <property type="entry name" value="Ribosomal_bL21"/>
    <property type="match status" value="1"/>
</dbReference>
<dbReference type="InterPro" id="IPR028909">
    <property type="entry name" value="bL21-like"/>
</dbReference>
<dbReference type="InterPro" id="IPR036164">
    <property type="entry name" value="bL21-like_sf"/>
</dbReference>
<dbReference type="InterPro" id="IPR001787">
    <property type="entry name" value="Ribosomal_bL21"/>
</dbReference>
<dbReference type="NCBIfam" id="TIGR00061">
    <property type="entry name" value="L21"/>
    <property type="match status" value="1"/>
</dbReference>
<dbReference type="PANTHER" id="PTHR21349">
    <property type="entry name" value="50S RIBOSOMAL PROTEIN L21"/>
    <property type="match status" value="1"/>
</dbReference>
<dbReference type="PANTHER" id="PTHR21349:SF0">
    <property type="entry name" value="LARGE RIBOSOMAL SUBUNIT PROTEIN BL21M"/>
    <property type="match status" value="1"/>
</dbReference>
<dbReference type="Pfam" id="PF00829">
    <property type="entry name" value="Ribosomal_L21p"/>
    <property type="match status" value="1"/>
</dbReference>
<dbReference type="SUPFAM" id="SSF141091">
    <property type="entry name" value="L21p-like"/>
    <property type="match status" value="1"/>
</dbReference>
<gene>
    <name evidence="1" type="primary">rplU</name>
    <name type="ordered locus">A2cp1_4335</name>
</gene>
<organism>
    <name type="scientific">Anaeromyxobacter dehalogenans (strain 2CP-1 / ATCC BAA-258)</name>
    <dbReference type="NCBI Taxonomy" id="455488"/>
    <lineage>
        <taxon>Bacteria</taxon>
        <taxon>Pseudomonadati</taxon>
        <taxon>Myxococcota</taxon>
        <taxon>Myxococcia</taxon>
        <taxon>Myxococcales</taxon>
        <taxon>Cystobacterineae</taxon>
        <taxon>Anaeromyxobacteraceae</taxon>
        <taxon>Anaeromyxobacter</taxon>
    </lineage>
</organism>
<comment type="function">
    <text evidence="1">This protein binds to 23S rRNA in the presence of protein L20.</text>
</comment>
<comment type="subunit">
    <text evidence="1">Part of the 50S ribosomal subunit. Contacts protein L20.</text>
</comment>
<comment type="similarity">
    <text evidence="1">Belongs to the bacterial ribosomal protein bL21 family.</text>
</comment>
<reference key="1">
    <citation type="submission" date="2009-01" db="EMBL/GenBank/DDBJ databases">
        <title>Complete sequence of Anaeromyxobacter dehalogenans 2CP-1.</title>
        <authorList>
            <person name="Lucas S."/>
            <person name="Copeland A."/>
            <person name="Lapidus A."/>
            <person name="Glavina del Rio T."/>
            <person name="Dalin E."/>
            <person name="Tice H."/>
            <person name="Bruce D."/>
            <person name="Goodwin L."/>
            <person name="Pitluck S."/>
            <person name="Saunders E."/>
            <person name="Brettin T."/>
            <person name="Detter J.C."/>
            <person name="Han C."/>
            <person name="Larimer F."/>
            <person name="Land M."/>
            <person name="Hauser L."/>
            <person name="Kyrpides N."/>
            <person name="Ovchinnikova G."/>
            <person name="Beliaev A.S."/>
            <person name="Richardson P."/>
        </authorList>
    </citation>
    <scope>NUCLEOTIDE SEQUENCE [LARGE SCALE GENOMIC DNA]</scope>
    <source>
        <strain>2CP-1 / ATCC BAA-258</strain>
    </source>
</reference>
<feature type="chain" id="PRO_1000166697" description="Large ribosomal subunit protein bL21">
    <location>
        <begin position="1"/>
        <end position="101"/>
    </location>
</feature>